<feature type="chain" id="PRO_1000090500" description="Crossover junction endodeoxyribonuclease RuvC">
    <location>
        <begin position="1"/>
        <end position="173"/>
    </location>
</feature>
<feature type="active site" evidence="1">
    <location>
        <position position="8"/>
    </location>
</feature>
<feature type="active site" evidence="1">
    <location>
        <position position="67"/>
    </location>
</feature>
<feature type="active site" evidence="1">
    <location>
        <position position="139"/>
    </location>
</feature>
<feature type="binding site" evidence="1">
    <location>
        <position position="8"/>
    </location>
    <ligand>
        <name>Mg(2+)</name>
        <dbReference type="ChEBI" id="CHEBI:18420"/>
        <label>1</label>
    </ligand>
</feature>
<feature type="binding site" evidence="1">
    <location>
        <position position="67"/>
    </location>
    <ligand>
        <name>Mg(2+)</name>
        <dbReference type="ChEBI" id="CHEBI:18420"/>
        <label>2</label>
    </ligand>
</feature>
<feature type="binding site" evidence="1">
    <location>
        <position position="139"/>
    </location>
    <ligand>
        <name>Mg(2+)</name>
        <dbReference type="ChEBI" id="CHEBI:18420"/>
        <label>1</label>
    </ligand>
</feature>
<protein>
    <recommendedName>
        <fullName evidence="1">Crossover junction endodeoxyribonuclease RuvC</fullName>
        <ecNumber evidence="1">3.1.21.10</ecNumber>
    </recommendedName>
    <alternativeName>
        <fullName evidence="1">Holliday junction nuclease RuvC</fullName>
    </alternativeName>
    <alternativeName>
        <fullName evidence="1">Holliday junction resolvase RuvC</fullName>
    </alternativeName>
</protein>
<name>RUVC_ALISL</name>
<evidence type="ECO:0000255" key="1">
    <source>
        <dbReference type="HAMAP-Rule" id="MF_00034"/>
    </source>
</evidence>
<accession>B6EGJ2</accession>
<sequence>MSIILGIDPGSRITGYGVIRQNGRHLQYLGSGCIRMSEKELPGRLKQIYAGVSEIITQFQPDVFAIEQVFMSKNADSALKLGQARGSAIVAAVNADLPVYEYAARLIKQAVTGTGAADKAQVQHMVMTMLKLPARPQADAADGLGVAICHANTNKTLIALAGKATGARRGRYR</sequence>
<reference key="1">
    <citation type="journal article" date="2008" name="BMC Genomics">
        <title>The genome sequence of the fish pathogen Aliivibrio salmonicida strain LFI1238 shows extensive evidence of gene decay.</title>
        <authorList>
            <person name="Hjerde E."/>
            <person name="Lorentzen M.S."/>
            <person name="Holden M.T."/>
            <person name="Seeger K."/>
            <person name="Paulsen S."/>
            <person name="Bason N."/>
            <person name="Churcher C."/>
            <person name="Harris D."/>
            <person name="Norbertczak H."/>
            <person name="Quail M.A."/>
            <person name="Sanders S."/>
            <person name="Thurston S."/>
            <person name="Parkhill J."/>
            <person name="Willassen N.P."/>
            <person name="Thomson N.R."/>
        </authorList>
    </citation>
    <scope>NUCLEOTIDE SEQUENCE [LARGE SCALE GENOMIC DNA]</scope>
    <source>
        <strain>LFI1238</strain>
    </source>
</reference>
<gene>
    <name evidence="1" type="primary">ruvC</name>
    <name type="ordered locus">VSAL_I1887</name>
</gene>
<keyword id="KW-0963">Cytoplasm</keyword>
<keyword id="KW-0227">DNA damage</keyword>
<keyword id="KW-0233">DNA recombination</keyword>
<keyword id="KW-0234">DNA repair</keyword>
<keyword id="KW-0238">DNA-binding</keyword>
<keyword id="KW-0255">Endonuclease</keyword>
<keyword id="KW-0378">Hydrolase</keyword>
<keyword id="KW-0460">Magnesium</keyword>
<keyword id="KW-0479">Metal-binding</keyword>
<keyword id="KW-0540">Nuclease</keyword>
<comment type="function">
    <text evidence="1">The RuvA-RuvB-RuvC complex processes Holliday junction (HJ) DNA during genetic recombination and DNA repair. Endonuclease that resolves HJ intermediates. Cleaves cruciform DNA by making single-stranded nicks across the HJ at symmetrical positions within the homologous arms, yielding a 5'-phosphate and a 3'-hydroxyl group; requires a central core of homology in the junction. The consensus cleavage sequence is 5'-(A/T)TT(C/G)-3'. Cleavage occurs on the 3'-side of the TT dinucleotide at the point of strand exchange. HJ branch migration catalyzed by RuvA-RuvB allows RuvC to scan DNA until it finds its consensus sequence, where it cleaves and resolves the cruciform DNA.</text>
</comment>
<comment type="catalytic activity">
    <reaction evidence="1">
        <text>Endonucleolytic cleavage at a junction such as a reciprocal single-stranded crossover between two homologous DNA duplexes (Holliday junction).</text>
        <dbReference type="EC" id="3.1.21.10"/>
    </reaction>
</comment>
<comment type="cofactor">
    <cofactor evidence="1">
        <name>Mg(2+)</name>
        <dbReference type="ChEBI" id="CHEBI:18420"/>
    </cofactor>
    <text evidence="1">Binds 2 Mg(2+) ion per subunit.</text>
</comment>
<comment type="subunit">
    <text evidence="1">Homodimer which binds Holliday junction (HJ) DNA. The HJ becomes 2-fold symmetrical on binding to RuvC with unstacked arms; it has a different conformation from HJ DNA in complex with RuvA. In the full resolvosome a probable DNA-RuvA(4)-RuvB(12)-RuvC(2) complex forms which resolves the HJ.</text>
</comment>
<comment type="subcellular location">
    <subcellularLocation>
        <location evidence="1">Cytoplasm</location>
    </subcellularLocation>
</comment>
<comment type="similarity">
    <text evidence="1">Belongs to the RuvC family.</text>
</comment>
<dbReference type="EC" id="3.1.21.10" evidence="1"/>
<dbReference type="EMBL" id="FM178379">
    <property type="protein sequence ID" value="CAQ79572.1"/>
    <property type="molecule type" value="Genomic_DNA"/>
</dbReference>
<dbReference type="RefSeq" id="WP_012550462.1">
    <property type="nucleotide sequence ID" value="NC_011312.1"/>
</dbReference>
<dbReference type="SMR" id="B6EGJ2"/>
<dbReference type="KEGG" id="vsa:VSAL_I1887"/>
<dbReference type="eggNOG" id="COG0817">
    <property type="taxonomic scope" value="Bacteria"/>
</dbReference>
<dbReference type="HOGENOM" id="CLU_091257_2_1_6"/>
<dbReference type="Proteomes" id="UP000001730">
    <property type="component" value="Chromosome 1"/>
</dbReference>
<dbReference type="GO" id="GO:0005737">
    <property type="term" value="C:cytoplasm"/>
    <property type="evidence" value="ECO:0007669"/>
    <property type="project" value="UniProtKB-SubCell"/>
</dbReference>
<dbReference type="GO" id="GO:0048476">
    <property type="term" value="C:Holliday junction resolvase complex"/>
    <property type="evidence" value="ECO:0007669"/>
    <property type="project" value="UniProtKB-UniRule"/>
</dbReference>
<dbReference type="GO" id="GO:0008821">
    <property type="term" value="F:crossover junction DNA endonuclease activity"/>
    <property type="evidence" value="ECO:0007669"/>
    <property type="project" value="UniProtKB-UniRule"/>
</dbReference>
<dbReference type="GO" id="GO:0003677">
    <property type="term" value="F:DNA binding"/>
    <property type="evidence" value="ECO:0007669"/>
    <property type="project" value="UniProtKB-KW"/>
</dbReference>
<dbReference type="GO" id="GO:0000287">
    <property type="term" value="F:magnesium ion binding"/>
    <property type="evidence" value="ECO:0007669"/>
    <property type="project" value="UniProtKB-UniRule"/>
</dbReference>
<dbReference type="GO" id="GO:0006310">
    <property type="term" value="P:DNA recombination"/>
    <property type="evidence" value="ECO:0007669"/>
    <property type="project" value="UniProtKB-UniRule"/>
</dbReference>
<dbReference type="GO" id="GO:0006281">
    <property type="term" value="P:DNA repair"/>
    <property type="evidence" value="ECO:0007669"/>
    <property type="project" value="UniProtKB-UniRule"/>
</dbReference>
<dbReference type="CDD" id="cd16962">
    <property type="entry name" value="RuvC"/>
    <property type="match status" value="1"/>
</dbReference>
<dbReference type="FunFam" id="3.30.420.10:FF:000002">
    <property type="entry name" value="Crossover junction endodeoxyribonuclease RuvC"/>
    <property type="match status" value="1"/>
</dbReference>
<dbReference type="Gene3D" id="3.30.420.10">
    <property type="entry name" value="Ribonuclease H-like superfamily/Ribonuclease H"/>
    <property type="match status" value="1"/>
</dbReference>
<dbReference type="HAMAP" id="MF_00034">
    <property type="entry name" value="RuvC"/>
    <property type="match status" value="1"/>
</dbReference>
<dbReference type="InterPro" id="IPR012337">
    <property type="entry name" value="RNaseH-like_sf"/>
</dbReference>
<dbReference type="InterPro" id="IPR036397">
    <property type="entry name" value="RNaseH_sf"/>
</dbReference>
<dbReference type="InterPro" id="IPR020563">
    <property type="entry name" value="X-over_junc_endoDNase_Mg_BS"/>
</dbReference>
<dbReference type="InterPro" id="IPR002176">
    <property type="entry name" value="X-over_junc_endoDNase_RuvC"/>
</dbReference>
<dbReference type="NCBIfam" id="TIGR00228">
    <property type="entry name" value="ruvC"/>
    <property type="match status" value="1"/>
</dbReference>
<dbReference type="PANTHER" id="PTHR30194">
    <property type="entry name" value="CROSSOVER JUNCTION ENDODEOXYRIBONUCLEASE RUVC"/>
    <property type="match status" value="1"/>
</dbReference>
<dbReference type="PANTHER" id="PTHR30194:SF3">
    <property type="entry name" value="CROSSOVER JUNCTION ENDODEOXYRIBONUCLEASE RUVC"/>
    <property type="match status" value="1"/>
</dbReference>
<dbReference type="Pfam" id="PF02075">
    <property type="entry name" value="RuvC"/>
    <property type="match status" value="1"/>
</dbReference>
<dbReference type="PRINTS" id="PR00696">
    <property type="entry name" value="RSOLVASERUVC"/>
</dbReference>
<dbReference type="SUPFAM" id="SSF53098">
    <property type="entry name" value="Ribonuclease H-like"/>
    <property type="match status" value="1"/>
</dbReference>
<dbReference type="PROSITE" id="PS01321">
    <property type="entry name" value="RUVC"/>
    <property type="match status" value="1"/>
</dbReference>
<organism>
    <name type="scientific">Aliivibrio salmonicida (strain LFI1238)</name>
    <name type="common">Vibrio salmonicida (strain LFI1238)</name>
    <dbReference type="NCBI Taxonomy" id="316275"/>
    <lineage>
        <taxon>Bacteria</taxon>
        <taxon>Pseudomonadati</taxon>
        <taxon>Pseudomonadota</taxon>
        <taxon>Gammaproteobacteria</taxon>
        <taxon>Vibrionales</taxon>
        <taxon>Vibrionaceae</taxon>
        <taxon>Aliivibrio</taxon>
    </lineage>
</organism>
<proteinExistence type="inferred from homology"/>